<proteinExistence type="inferred from homology"/>
<evidence type="ECO:0000255" key="1">
    <source>
        <dbReference type="HAMAP-Rule" id="MF_01022"/>
    </source>
</evidence>
<gene>
    <name evidence="1" type="primary">hisB</name>
    <name type="ordered locus">JJD26997_1952</name>
</gene>
<dbReference type="EC" id="3.1.3.15" evidence="1"/>
<dbReference type="EC" id="4.2.1.19" evidence="1"/>
<dbReference type="EMBL" id="CP000768">
    <property type="protein sequence ID" value="ABS44198.1"/>
    <property type="molecule type" value="Genomic_DNA"/>
</dbReference>
<dbReference type="SMR" id="A7H5U9"/>
<dbReference type="KEGG" id="cjd:JJD26997_1952"/>
<dbReference type="HOGENOM" id="CLU_044308_0_0_7"/>
<dbReference type="UniPathway" id="UPA00031">
    <property type="reaction ID" value="UER00011"/>
</dbReference>
<dbReference type="UniPathway" id="UPA00031">
    <property type="reaction ID" value="UER00013"/>
</dbReference>
<dbReference type="Proteomes" id="UP000002302">
    <property type="component" value="Chromosome"/>
</dbReference>
<dbReference type="GO" id="GO:0005737">
    <property type="term" value="C:cytoplasm"/>
    <property type="evidence" value="ECO:0007669"/>
    <property type="project" value="UniProtKB-SubCell"/>
</dbReference>
<dbReference type="GO" id="GO:0004401">
    <property type="term" value="F:histidinol-phosphatase activity"/>
    <property type="evidence" value="ECO:0007669"/>
    <property type="project" value="UniProtKB-UniRule"/>
</dbReference>
<dbReference type="GO" id="GO:0004424">
    <property type="term" value="F:imidazoleglycerol-phosphate dehydratase activity"/>
    <property type="evidence" value="ECO:0007669"/>
    <property type="project" value="UniProtKB-UniRule"/>
</dbReference>
<dbReference type="GO" id="GO:0046872">
    <property type="term" value="F:metal ion binding"/>
    <property type="evidence" value="ECO:0007669"/>
    <property type="project" value="UniProtKB-KW"/>
</dbReference>
<dbReference type="GO" id="GO:0000105">
    <property type="term" value="P:L-histidine biosynthetic process"/>
    <property type="evidence" value="ECO:0007669"/>
    <property type="project" value="UniProtKB-UniRule"/>
</dbReference>
<dbReference type="CDD" id="cd07503">
    <property type="entry name" value="HAD_HisB-N"/>
    <property type="match status" value="1"/>
</dbReference>
<dbReference type="CDD" id="cd07914">
    <property type="entry name" value="IGPD"/>
    <property type="match status" value="1"/>
</dbReference>
<dbReference type="FunFam" id="3.40.50.1000:FF:000061">
    <property type="entry name" value="Histidine biosynthesis bifunctional protein HisB"/>
    <property type="match status" value="1"/>
</dbReference>
<dbReference type="FunFam" id="3.30.230.40:FF:000001">
    <property type="entry name" value="Imidazoleglycerol-phosphate dehydratase HisB"/>
    <property type="match status" value="1"/>
</dbReference>
<dbReference type="FunFam" id="3.30.230.40:FF:000003">
    <property type="entry name" value="Imidazoleglycerol-phosphate dehydratase HisB"/>
    <property type="match status" value="1"/>
</dbReference>
<dbReference type="Gene3D" id="3.40.50.1000">
    <property type="entry name" value="HAD superfamily/HAD-like"/>
    <property type="match status" value="1"/>
</dbReference>
<dbReference type="Gene3D" id="3.30.230.40">
    <property type="entry name" value="Imidazole glycerol phosphate dehydratase, domain 1"/>
    <property type="match status" value="2"/>
</dbReference>
<dbReference type="HAMAP" id="MF_01022">
    <property type="entry name" value="Bifunc_HisB"/>
    <property type="match status" value="1"/>
</dbReference>
<dbReference type="HAMAP" id="MF_00076">
    <property type="entry name" value="HisB"/>
    <property type="match status" value="1"/>
</dbReference>
<dbReference type="InterPro" id="IPR036412">
    <property type="entry name" value="HAD-like_sf"/>
</dbReference>
<dbReference type="InterPro" id="IPR006549">
    <property type="entry name" value="HAD-SF_hydro_IIIA"/>
</dbReference>
<dbReference type="InterPro" id="IPR023214">
    <property type="entry name" value="HAD_sf"/>
</dbReference>
<dbReference type="InterPro" id="IPR020566">
    <property type="entry name" value="His_synth_bifunc_HisB"/>
</dbReference>
<dbReference type="InterPro" id="IPR005954">
    <property type="entry name" value="HisB_N"/>
</dbReference>
<dbReference type="InterPro" id="IPR006543">
    <property type="entry name" value="Histidinol-phos"/>
</dbReference>
<dbReference type="InterPro" id="IPR038494">
    <property type="entry name" value="IGPD_sf"/>
</dbReference>
<dbReference type="InterPro" id="IPR000807">
    <property type="entry name" value="ImidazoleglycerolP_deHydtase"/>
</dbReference>
<dbReference type="InterPro" id="IPR020565">
    <property type="entry name" value="ImidazoleglycerP_deHydtase_CS"/>
</dbReference>
<dbReference type="InterPro" id="IPR013954">
    <property type="entry name" value="PNK3P"/>
</dbReference>
<dbReference type="InterPro" id="IPR020568">
    <property type="entry name" value="Ribosomal_Su5_D2-typ_SF"/>
</dbReference>
<dbReference type="NCBIfam" id="TIGR01662">
    <property type="entry name" value="HAD-SF-IIIA"/>
    <property type="match status" value="1"/>
</dbReference>
<dbReference type="NCBIfam" id="TIGR01261">
    <property type="entry name" value="hisB_Nterm"/>
    <property type="match status" value="1"/>
</dbReference>
<dbReference type="NCBIfam" id="TIGR01656">
    <property type="entry name" value="Histidinol-ppas"/>
    <property type="match status" value="1"/>
</dbReference>
<dbReference type="NCBIfam" id="NF002111">
    <property type="entry name" value="PRK00951.2-1"/>
    <property type="match status" value="1"/>
</dbReference>
<dbReference type="NCBIfam" id="NF003937">
    <property type="entry name" value="PRK05446.1"/>
    <property type="match status" value="1"/>
</dbReference>
<dbReference type="PANTHER" id="PTHR23133:SF2">
    <property type="entry name" value="IMIDAZOLEGLYCEROL-PHOSPHATE DEHYDRATASE"/>
    <property type="match status" value="1"/>
</dbReference>
<dbReference type="PANTHER" id="PTHR23133">
    <property type="entry name" value="IMIDAZOLEGLYCEROL-PHOSPHATE DEHYDRATASE HIS7"/>
    <property type="match status" value="1"/>
</dbReference>
<dbReference type="Pfam" id="PF00475">
    <property type="entry name" value="IGPD"/>
    <property type="match status" value="1"/>
</dbReference>
<dbReference type="Pfam" id="PF08645">
    <property type="entry name" value="PNK3P"/>
    <property type="match status" value="1"/>
</dbReference>
<dbReference type="SUPFAM" id="SSF56784">
    <property type="entry name" value="HAD-like"/>
    <property type="match status" value="1"/>
</dbReference>
<dbReference type="SUPFAM" id="SSF54211">
    <property type="entry name" value="Ribosomal protein S5 domain 2-like"/>
    <property type="match status" value="2"/>
</dbReference>
<dbReference type="PROSITE" id="PS00954">
    <property type="entry name" value="IGP_DEHYDRATASE_1"/>
    <property type="match status" value="1"/>
</dbReference>
<dbReference type="PROSITE" id="PS00955">
    <property type="entry name" value="IGP_DEHYDRATASE_2"/>
    <property type="match status" value="1"/>
</dbReference>
<accession>A7H5U9</accession>
<keyword id="KW-0028">Amino-acid biosynthesis</keyword>
<keyword id="KW-0963">Cytoplasm</keyword>
<keyword id="KW-0368">Histidine biosynthesis</keyword>
<keyword id="KW-0378">Hydrolase</keyword>
<keyword id="KW-0456">Lyase</keyword>
<keyword id="KW-0460">Magnesium</keyword>
<keyword id="KW-0479">Metal-binding</keyword>
<keyword id="KW-0511">Multifunctional enzyme</keyword>
<keyword id="KW-0862">Zinc</keyword>
<sequence>MSQKILFIDRDGTLIEEPKSDFQIDTLEKLRFEKDAIPTLLKLKKFGFKFVMVSNQDGLGTPSFPKENFEIAHEKMLDILKSCGIEFQDIFICPHFENENCACRKPKTAMLEEYIKHELYDKEQSFVIGDRESDMILASNLGVRGLKYGALSWKEIENEILSSFRSASYQRTTKETDIKVKVCLNGGKVSIKTGIDFFDHMLEQIAVHGDIGLEISCKGDLEIDEHHSVEDVALALGACIKKALGDKIGIARYGFTLPMDECLASCAMDFCNRPHLVYKAKFKKSHLGALSTEMIEHFFYSLSYAMGVSLHLKVKGKNDHHKAEGLFKAFAKALKMAVKIESENLASSKGVI</sequence>
<name>HIS7_CAMJD</name>
<feature type="chain" id="PRO_1000063442" description="Histidine biosynthesis bifunctional protein HisB">
    <location>
        <begin position="1"/>
        <end position="352"/>
    </location>
</feature>
<feature type="region of interest" description="Histidinol-phosphatase" evidence="1">
    <location>
        <begin position="1"/>
        <end position="164"/>
    </location>
</feature>
<feature type="region of interest" description="Imidazoleglycerol-phosphate dehydratase" evidence="1">
    <location>
        <begin position="165"/>
        <end position="352"/>
    </location>
</feature>
<feature type="active site" description="Nucleophile" evidence="1">
    <location>
        <position position="9"/>
    </location>
</feature>
<feature type="active site" description="Proton donor" evidence="1">
    <location>
        <position position="11"/>
    </location>
</feature>
<feature type="binding site" evidence="1">
    <location>
        <position position="9"/>
    </location>
    <ligand>
        <name>Mg(2+)</name>
        <dbReference type="ChEBI" id="CHEBI:18420"/>
    </ligand>
</feature>
<feature type="binding site" evidence="1">
    <location>
        <position position="11"/>
    </location>
    <ligand>
        <name>Mg(2+)</name>
        <dbReference type="ChEBI" id="CHEBI:18420"/>
    </ligand>
</feature>
<feature type="binding site" evidence="1">
    <location>
        <position position="93"/>
    </location>
    <ligand>
        <name>Zn(2+)</name>
        <dbReference type="ChEBI" id="CHEBI:29105"/>
    </ligand>
</feature>
<feature type="binding site" evidence="1">
    <location>
        <position position="95"/>
    </location>
    <ligand>
        <name>Zn(2+)</name>
        <dbReference type="ChEBI" id="CHEBI:29105"/>
    </ligand>
</feature>
<feature type="binding site" evidence="1">
    <location>
        <position position="101"/>
    </location>
    <ligand>
        <name>Zn(2+)</name>
        <dbReference type="ChEBI" id="CHEBI:29105"/>
    </ligand>
</feature>
<feature type="binding site" evidence="1">
    <location>
        <position position="103"/>
    </location>
    <ligand>
        <name>Zn(2+)</name>
        <dbReference type="ChEBI" id="CHEBI:29105"/>
    </ligand>
</feature>
<feature type="binding site" evidence="1">
    <location>
        <position position="130"/>
    </location>
    <ligand>
        <name>Mg(2+)</name>
        <dbReference type="ChEBI" id="CHEBI:18420"/>
    </ligand>
</feature>
<organism>
    <name type="scientific">Campylobacter jejuni subsp. doylei (strain ATCC BAA-1458 / RM4099 / 269.97)</name>
    <dbReference type="NCBI Taxonomy" id="360109"/>
    <lineage>
        <taxon>Bacteria</taxon>
        <taxon>Pseudomonadati</taxon>
        <taxon>Campylobacterota</taxon>
        <taxon>Epsilonproteobacteria</taxon>
        <taxon>Campylobacterales</taxon>
        <taxon>Campylobacteraceae</taxon>
        <taxon>Campylobacter</taxon>
    </lineage>
</organism>
<reference key="1">
    <citation type="submission" date="2007-07" db="EMBL/GenBank/DDBJ databases">
        <title>Complete genome sequence of Campylobacter jejuni subsp doylei 269.97 isolated from human blood.</title>
        <authorList>
            <person name="Fouts D.E."/>
            <person name="Mongodin E.F."/>
            <person name="Puiu D."/>
            <person name="Sebastian Y."/>
            <person name="Miller W.G."/>
            <person name="Mandrell R.E."/>
            <person name="Lastovica A.J."/>
            <person name="Nelson K.E."/>
        </authorList>
    </citation>
    <scope>NUCLEOTIDE SEQUENCE [LARGE SCALE GENOMIC DNA]</scope>
    <source>
        <strain>ATCC BAA-1458 / RM4099 / 269.97</strain>
    </source>
</reference>
<comment type="catalytic activity">
    <reaction evidence="1">
        <text>D-erythro-1-(imidazol-4-yl)glycerol 3-phosphate = 3-(imidazol-4-yl)-2-oxopropyl phosphate + H2O</text>
        <dbReference type="Rhea" id="RHEA:11040"/>
        <dbReference type="ChEBI" id="CHEBI:15377"/>
        <dbReference type="ChEBI" id="CHEBI:57766"/>
        <dbReference type="ChEBI" id="CHEBI:58278"/>
        <dbReference type="EC" id="4.2.1.19"/>
    </reaction>
</comment>
<comment type="catalytic activity">
    <reaction evidence="1">
        <text>L-histidinol phosphate + H2O = L-histidinol + phosphate</text>
        <dbReference type="Rhea" id="RHEA:14465"/>
        <dbReference type="ChEBI" id="CHEBI:15377"/>
        <dbReference type="ChEBI" id="CHEBI:43474"/>
        <dbReference type="ChEBI" id="CHEBI:57699"/>
        <dbReference type="ChEBI" id="CHEBI:57980"/>
        <dbReference type="EC" id="3.1.3.15"/>
    </reaction>
</comment>
<comment type="cofactor">
    <cofactor evidence="1">
        <name>Mg(2+)</name>
        <dbReference type="ChEBI" id="CHEBI:18420"/>
    </cofactor>
</comment>
<comment type="cofactor">
    <cofactor evidence="1">
        <name>Zn(2+)</name>
        <dbReference type="ChEBI" id="CHEBI:29105"/>
    </cofactor>
</comment>
<comment type="pathway">
    <text evidence="1">Amino-acid biosynthesis; L-histidine biosynthesis; L-histidine from 5-phospho-alpha-D-ribose 1-diphosphate: step 6/9.</text>
</comment>
<comment type="pathway">
    <text evidence="1">Amino-acid biosynthesis; L-histidine biosynthesis; L-histidine from 5-phospho-alpha-D-ribose 1-diphosphate: step 8/9.</text>
</comment>
<comment type="subcellular location">
    <subcellularLocation>
        <location evidence="1">Cytoplasm</location>
    </subcellularLocation>
</comment>
<comment type="similarity">
    <text evidence="1">In the N-terminal section; belongs to the histidinol-phosphatase family.</text>
</comment>
<comment type="similarity">
    <text evidence="1">In the C-terminal section; belongs to the imidazoleglycerol-phosphate dehydratase family.</text>
</comment>
<protein>
    <recommendedName>
        <fullName evidence="1">Histidine biosynthesis bifunctional protein HisB</fullName>
    </recommendedName>
    <domain>
        <recommendedName>
            <fullName evidence="1">Histidinol-phosphatase</fullName>
            <ecNumber evidence="1">3.1.3.15</ecNumber>
        </recommendedName>
    </domain>
    <domain>
        <recommendedName>
            <fullName evidence="1">Imidazoleglycerol-phosphate dehydratase</fullName>
            <shortName evidence="1">IGPD</shortName>
            <ecNumber evidence="1">4.2.1.19</ecNumber>
        </recommendedName>
    </domain>
</protein>